<protein>
    <recommendedName>
        <fullName evidence="1">Replication factor C large subunit</fullName>
        <shortName evidence="1">RFC large subunit</shortName>
    </recommendedName>
    <alternativeName>
        <fullName evidence="1">Clamp loader large subunit</fullName>
    </alternativeName>
</protein>
<name>RFCL_HALWD</name>
<feature type="chain" id="PRO_0000292179" description="Replication factor C large subunit">
    <location>
        <begin position="1"/>
        <end position="516"/>
    </location>
</feature>
<feature type="region of interest" description="Disordered" evidence="2">
    <location>
        <begin position="421"/>
        <end position="516"/>
    </location>
</feature>
<feature type="compositionally biased region" description="Basic and acidic residues" evidence="2">
    <location>
        <begin position="454"/>
        <end position="467"/>
    </location>
</feature>
<feature type="compositionally biased region" description="Low complexity" evidence="2">
    <location>
        <begin position="479"/>
        <end position="496"/>
    </location>
</feature>
<feature type="compositionally biased region" description="Acidic residues" evidence="2">
    <location>
        <begin position="497"/>
        <end position="508"/>
    </location>
</feature>
<feature type="binding site" evidence="1">
    <location>
        <begin position="44"/>
        <end position="51"/>
    </location>
    <ligand>
        <name>ATP</name>
        <dbReference type="ChEBI" id="CHEBI:30616"/>
    </ligand>
</feature>
<reference key="1">
    <citation type="journal article" date="2006" name="BMC Genomics">
        <title>The genome of the square archaeon Haloquadratum walsbyi: life at the limits of water activity.</title>
        <authorList>
            <person name="Bolhuis H."/>
            <person name="Palm P."/>
            <person name="Wende A."/>
            <person name="Falb M."/>
            <person name="Rampp M."/>
            <person name="Rodriguez-Valera F."/>
            <person name="Pfeiffer F."/>
            <person name="Oesterhelt D."/>
        </authorList>
    </citation>
    <scope>NUCLEOTIDE SEQUENCE [LARGE SCALE GENOMIC DNA]</scope>
    <source>
        <strain>DSM 16790 / HBSQ001</strain>
    </source>
</reference>
<accession>Q18GQ9</accession>
<comment type="function">
    <text evidence="1">Part of the RFC clamp loader complex which loads the PCNA sliding clamp onto DNA.</text>
</comment>
<comment type="subunit">
    <text evidence="1">Heteromultimer composed of small subunits (RfcS) and large subunits (RfcL).</text>
</comment>
<comment type="similarity">
    <text evidence="1">Belongs to the activator 1 small subunits family. RfcL subfamily.</text>
</comment>
<gene>
    <name evidence="1" type="primary">rfcL</name>
    <name type="ordered locus">HQ_2729A</name>
</gene>
<sequence>MTDWTERYRPTTLSAVRGNNAARDEFIEWAESWDDHHESVVLHGAPGVGKTSAAHALASDMGWETVELNASDQRTSDVIERLAGRAAKNATLAGAVSGTTSTRQLIIMDEADNIHYQYDRGGKQAVTTLLKDANQPIVLIANEYYDMSRGLRNAAQDIEFRDISARSIVPVLRNILRKENIEFEEAALKQIAEVNSGDLRAAIKDLQTTVEGSDRITVDDVKTGGRDRAMGLFSFLDSVLKEDAAEEALQNSYDVDETPDDLLKWVEDKVPLVYDDAELARAYEFLSNADIWTNRVYATDYNYRWWRYATDNLAGGVAAARETQRGGWTRYGGAPYRSTRDSTRDTVVREVAKTGGFSMATARTAVIPFLSAITHLCKPRSLTVGMAAWYELDEAGVSYITGSGETTKKVASIVEDAAERRSEAVEAHAGSAFAETETEEKTNFTGNQDSDVDVQSHKSAESGDDTVRTANTPAEDHAQSGASETASATESASDSDASTDTDADDDDGQAGLSEFM</sequence>
<keyword id="KW-0067">ATP-binding</keyword>
<keyword id="KW-0235">DNA replication</keyword>
<keyword id="KW-0547">Nucleotide-binding</keyword>
<keyword id="KW-1185">Reference proteome</keyword>
<organism>
    <name type="scientific">Haloquadratum walsbyi (strain DSM 16790 / HBSQ001)</name>
    <dbReference type="NCBI Taxonomy" id="362976"/>
    <lineage>
        <taxon>Archaea</taxon>
        <taxon>Methanobacteriati</taxon>
        <taxon>Methanobacteriota</taxon>
        <taxon>Stenosarchaea group</taxon>
        <taxon>Halobacteria</taxon>
        <taxon>Halobacteriales</taxon>
        <taxon>Haloferacaceae</taxon>
        <taxon>Haloquadratum</taxon>
    </lineage>
</organism>
<dbReference type="EMBL" id="AM180088">
    <property type="protein sequence ID" value="CAJ52837.1"/>
    <property type="molecule type" value="Genomic_DNA"/>
</dbReference>
<dbReference type="RefSeq" id="WP_011571952.1">
    <property type="nucleotide sequence ID" value="NC_008212.1"/>
</dbReference>
<dbReference type="SMR" id="Q18GQ9"/>
<dbReference type="STRING" id="362976.HQ_2729A"/>
<dbReference type="GeneID" id="4194576"/>
<dbReference type="KEGG" id="hwa:HQ_2729A"/>
<dbReference type="eggNOG" id="arCOG00470">
    <property type="taxonomic scope" value="Archaea"/>
</dbReference>
<dbReference type="HOGENOM" id="CLU_027255_1_0_2"/>
<dbReference type="Proteomes" id="UP000001975">
    <property type="component" value="Chromosome"/>
</dbReference>
<dbReference type="GO" id="GO:0005524">
    <property type="term" value="F:ATP binding"/>
    <property type="evidence" value="ECO:0007669"/>
    <property type="project" value="UniProtKB-UniRule"/>
</dbReference>
<dbReference type="GO" id="GO:0016887">
    <property type="term" value="F:ATP hydrolysis activity"/>
    <property type="evidence" value="ECO:0007669"/>
    <property type="project" value="InterPro"/>
</dbReference>
<dbReference type="GO" id="GO:0003689">
    <property type="term" value="F:DNA clamp loader activity"/>
    <property type="evidence" value="ECO:0007669"/>
    <property type="project" value="UniProtKB-UniRule"/>
</dbReference>
<dbReference type="GO" id="GO:0006260">
    <property type="term" value="P:DNA replication"/>
    <property type="evidence" value="ECO:0007669"/>
    <property type="project" value="UniProtKB-UniRule"/>
</dbReference>
<dbReference type="CDD" id="cd00009">
    <property type="entry name" value="AAA"/>
    <property type="match status" value="1"/>
</dbReference>
<dbReference type="CDD" id="cd18140">
    <property type="entry name" value="HLD_clamp_RFC"/>
    <property type="match status" value="1"/>
</dbReference>
<dbReference type="Gene3D" id="1.10.8.60">
    <property type="match status" value="1"/>
</dbReference>
<dbReference type="Gene3D" id="3.40.50.300">
    <property type="entry name" value="P-loop containing nucleotide triphosphate hydrolases"/>
    <property type="match status" value="1"/>
</dbReference>
<dbReference type="HAMAP" id="MF_01508">
    <property type="entry name" value="RfcL"/>
    <property type="match status" value="1"/>
</dbReference>
<dbReference type="InterPro" id="IPR003593">
    <property type="entry name" value="AAA+_ATPase"/>
</dbReference>
<dbReference type="InterPro" id="IPR003959">
    <property type="entry name" value="ATPase_AAA_core"/>
</dbReference>
<dbReference type="InterPro" id="IPR027417">
    <property type="entry name" value="P-loop_NTPase"/>
</dbReference>
<dbReference type="InterPro" id="IPR023935">
    <property type="entry name" value="Rep_factor-C_lsu"/>
</dbReference>
<dbReference type="InterPro" id="IPR047854">
    <property type="entry name" value="RFC_lid"/>
</dbReference>
<dbReference type="NCBIfam" id="NF003228">
    <property type="entry name" value="PRK04195.1-4"/>
    <property type="match status" value="1"/>
</dbReference>
<dbReference type="NCBIfam" id="NF003229">
    <property type="entry name" value="PRK04195.1-5"/>
    <property type="match status" value="1"/>
</dbReference>
<dbReference type="PANTHER" id="PTHR23389">
    <property type="entry name" value="CHROMOSOME TRANSMISSION FIDELITY FACTOR 18"/>
    <property type="match status" value="1"/>
</dbReference>
<dbReference type="PANTHER" id="PTHR23389:SF6">
    <property type="entry name" value="REPLICATION FACTOR C SUBUNIT 1"/>
    <property type="match status" value="1"/>
</dbReference>
<dbReference type="Pfam" id="PF00004">
    <property type="entry name" value="AAA"/>
    <property type="match status" value="1"/>
</dbReference>
<dbReference type="Pfam" id="PF21960">
    <property type="entry name" value="RCF1-5-like_lid"/>
    <property type="match status" value="1"/>
</dbReference>
<dbReference type="SMART" id="SM00382">
    <property type="entry name" value="AAA"/>
    <property type="match status" value="1"/>
</dbReference>
<dbReference type="SUPFAM" id="SSF52540">
    <property type="entry name" value="P-loop containing nucleoside triphosphate hydrolases"/>
    <property type="match status" value="1"/>
</dbReference>
<evidence type="ECO:0000255" key="1">
    <source>
        <dbReference type="HAMAP-Rule" id="MF_01508"/>
    </source>
</evidence>
<evidence type="ECO:0000256" key="2">
    <source>
        <dbReference type="SAM" id="MobiDB-lite"/>
    </source>
</evidence>
<proteinExistence type="inferred from homology"/>